<dbReference type="EMBL" id="L42023">
    <property type="protein sequence ID" value="AAC23272.1"/>
    <property type="molecule type" value="Genomic_DNA"/>
</dbReference>
<dbReference type="PIR" id="G64038">
    <property type="entry name" value="G64038"/>
</dbReference>
<dbReference type="RefSeq" id="NP_439765.1">
    <property type="nucleotide sequence ID" value="NC_000907.1"/>
</dbReference>
<dbReference type="SMR" id="P44276"/>
<dbReference type="STRING" id="71421.HI_1624"/>
<dbReference type="EnsemblBacteria" id="AAC23272">
    <property type="protein sequence ID" value="AAC23272"/>
    <property type="gene ID" value="HI_1624"/>
</dbReference>
<dbReference type="KEGG" id="hin:HI_1624"/>
<dbReference type="PATRIC" id="fig|71421.8.peg.1698"/>
<dbReference type="eggNOG" id="COG5266">
    <property type="taxonomic scope" value="Bacteria"/>
</dbReference>
<dbReference type="HOGENOM" id="CLU_096093_2_0_6"/>
<dbReference type="OrthoDB" id="5368503at2"/>
<dbReference type="BioCyc" id="HINF71421:G1GJ1-1636-MONOMER"/>
<dbReference type="Proteomes" id="UP000000579">
    <property type="component" value="Chromosome"/>
</dbReference>
<dbReference type="InterPro" id="IPR019613">
    <property type="entry name" value="DUF4198"/>
</dbReference>
<dbReference type="Pfam" id="PF10670">
    <property type="entry name" value="DUF4198"/>
    <property type="match status" value="1"/>
</dbReference>
<evidence type="ECO:0000269" key="1">
    <source>
    </source>
</evidence>
<sequence>MELKKIAVGLTALLGMSVANAHNVWLEPASSQDEYVVKFGHEQTETYPESKLKSIQALNSQGKLTAVDYQFRNGEAYLMPKSDLVFVHFDNGVWSKLPSGKYVEKTKREEPTAEFSTNPVKFGKAILKWDAESFKSHQQAYELIPQEKAQANKPLSILVLHNGKPVQGIKVGVSEDAPFNLTNEKGIAQFTPTKGFNKVWAEFEEKVTNNADYDRRTVEYMLTFDAQ</sequence>
<protein>
    <recommendedName>
        <fullName>Uncharacterized protein HI_1624</fullName>
    </recommendedName>
</protein>
<proteinExistence type="evidence at protein level"/>
<gene>
    <name type="ordered locus">HI_1624</name>
</gene>
<reference key="1">
    <citation type="journal article" date="1995" name="Science">
        <title>Whole-genome random sequencing and assembly of Haemophilus influenzae Rd.</title>
        <authorList>
            <person name="Fleischmann R.D."/>
            <person name="Adams M.D."/>
            <person name="White O."/>
            <person name="Clayton R.A."/>
            <person name="Kirkness E.F."/>
            <person name="Kerlavage A.R."/>
            <person name="Bult C.J."/>
            <person name="Tomb J.-F."/>
            <person name="Dougherty B.A."/>
            <person name="Merrick J.M."/>
            <person name="McKenney K."/>
            <person name="Sutton G.G."/>
            <person name="FitzHugh W."/>
            <person name="Fields C.A."/>
            <person name="Gocayne J.D."/>
            <person name="Scott J.D."/>
            <person name="Shirley R."/>
            <person name="Liu L.-I."/>
            <person name="Glodek A."/>
            <person name="Kelley J.M."/>
            <person name="Weidman J.F."/>
            <person name="Phillips C.A."/>
            <person name="Spriggs T."/>
            <person name="Hedblom E."/>
            <person name="Cotton M.D."/>
            <person name="Utterback T.R."/>
            <person name="Hanna M.C."/>
            <person name="Nguyen D.T."/>
            <person name="Saudek D.M."/>
            <person name="Brandon R.C."/>
            <person name="Fine L.D."/>
            <person name="Fritchman J.L."/>
            <person name="Fuhrmann J.L."/>
            <person name="Geoghagen N.S.M."/>
            <person name="Gnehm C.L."/>
            <person name="McDonald L.A."/>
            <person name="Small K.V."/>
            <person name="Fraser C.M."/>
            <person name="Smith H.O."/>
            <person name="Venter J.C."/>
        </authorList>
    </citation>
    <scope>NUCLEOTIDE SEQUENCE [LARGE SCALE GENOMIC DNA]</scope>
    <source>
        <strain>ATCC 51907 / DSM 11121 / KW20 / Rd</strain>
    </source>
</reference>
<reference key="2">
    <citation type="journal article" date="2000" name="Electrophoresis">
        <title>Two-dimensional map of the proteome of Haemophilus influenzae.</title>
        <authorList>
            <person name="Langen H."/>
            <person name="Takacs B."/>
            <person name="Evers S."/>
            <person name="Berndt P."/>
            <person name="Lahm H.W."/>
            <person name="Wipf B."/>
            <person name="Gray C."/>
            <person name="Fountoulakis M."/>
        </authorList>
    </citation>
    <scope>PROTEIN SEQUENCE OF 22-32</scope>
    <source>
        <strain>ATCC 51907 / DSM 11121 / KW20 / Rd</strain>
    </source>
</reference>
<feature type="signal peptide" evidence="1">
    <location>
        <begin position="1"/>
        <end position="21"/>
    </location>
</feature>
<feature type="chain" id="PRO_0000013976" description="Uncharacterized protein HI_1624">
    <location>
        <begin position="22"/>
        <end position="227"/>
    </location>
</feature>
<keyword id="KW-0903">Direct protein sequencing</keyword>
<keyword id="KW-1185">Reference proteome</keyword>
<keyword id="KW-0732">Signal</keyword>
<accession>P44276</accession>
<name>Y1624_HAEIN</name>
<organism>
    <name type="scientific">Haemophilus influenzae (strain ATCC 51907 / DSM 11121 / KW20 / Rd)</name>
    <dbReference type="NCBI Taxonomy" id="71421"/>
    <lineage>
        <taxon>Bacteria</taxon>
        <taxon>Pseudomonadati</taxon>
        <taxon>Pseudomonadota</taxon>
        <taxon>Gammaproteobacteria</taxon>
        <taxon>Pasteurellales</taxon>
        <taxon>Pasteurellaceae</taxon>
        <taxon>Haemophilus</taxon>
    </lineage>
</organism>